<evidence type="ECO:0000255" key="1">
    <source>
        <dbReference type="HAMAP-Rule" id="MF_00385"/>
    </source>
</evidence>
<evidence type="ECO:0000305" key="2"/>
<keyword id="KW-1185">Reference proteome</keyword>
<keyword id="KW-0687">Ribonucleoprotein</keyword>
<keyword id="KW-0689">Ribosomal protein</keyword>
<reference key="1">
    <citation type="journal article" date="2005" name="Genome Res.">
        <title>Genome sequence of Blochmannia pennsylvanicus indicates parallel evolutionary trends among bacterial mutualists of insects.</title>
        <authorList>
            <person name="Degnan P.H."/>
            <person name="Lazarus A.B."/>
            <person name="Wernegreen J.J."/>
        </authorList>
    </citation>
    <scope>NUCLEOTIDE SEQUENCE [LARGE SCALE GENOMIC DNA]</scope>
    <source>
        <strain>BPEN</strain>
    </source>
</reference>
<dbReference type="EMBL" id="CP000016">
    <property type="protein sequence ID" value="AAZ40817.1"/>
    <property type="molecule type" value="Genomic_DNA"/>
</dbReference>
<dbReference type="RefSeq" id="WP_011282724.1">
    <property type="nucleotide sequence ID" value="NC_007292.1"/>
</dbReference>
<dbReference type="SMR" id="Q493M3"/>
<dbReference type="STRING" id="291272.BPEN_179"/>
<dbReference type="KEGG" id="bpn:BPEN_179"/>
<dbReference type="eggNOG" id="COG0228">
    <property type="taxonomic scope" value="Bacteria"/>
</dbReference>
<dbReference type="HOGENOM" id="CLU_100590_5_1_6"/>
<dbReference type="OrthoDB" id="9807878at2"/>
<dbReference type="Proteomes" id="UP000007794">
    <property type="component" value="Chromosome"/>
</dbReference>
<dbReference type="GO" id="GO:0005737">
    <property type="term" value="C:cytoplasm"/>
    <property type="evidence" value="ECO:0007669"/>
    <property type="project" value="UniProtKB-ARBA"/>
</dbReference>
<dbReference type="GO" id="GO:0015935">
    <property type="term" value="C:small ribosomal subunit"/>
    <property type="evidence" value="ECO:0007669"/>
    <property type="project" value="TreeGrafter"/>
</dbReference>
<dbReference type="GO" id="GO:0003735">
    <property type="term" value="F:structural constituent of ribosome"/>
    <property type="evidence" value="ECO:0007669"/>
    <property type="project" value="InterPro"/>
</dbReference>
<dbReference type="GO" id="GO:0006412">
    <property type="term" value="P:translation"/>
    <property type="evidence" value="ECO:0007669"/>
    <property type="project" value="UniProtKB-UniRule"/>
</dbReference>
<dbReference type="Gene3D" id="3.30.1320.10">
    <property type="match status" value="1"/>
</dbReference>
<dbReference type="HAMAP" id="MF_00385">
    <property type="entry name" value="Ribosomal_bS16"/>
    <property type="match status" value="1"/>
</dbReference>
<dbReference type="InterPro" id="IPR000307">
    <property type="entry name" value="Ribosomal_bS16"/>
</dbReference>
<dbReference type="InterPro" id="IPR023803">
    <property type="entry name" value="Ribosomal_bS16_dom_sf"/>
</dbReference>
<dbReference type="NCBIfam" id="TIGR00002">
    <property type="entry name" value="S16"/>
    <property type="match status" value="1"/>
</dbReference>
<dbReference type="PANTHER" id="PTHR12919">
    <property type="entry name" value="30S RIBOSOMAL PROTEIN S16"/>
    <property type="match status" value="1"/>
</dbReference>
<dbReference type="PANTHER" id="PTHR12919:SF20">
    <property type="entry name" value="SMALL RIBOSOMAL SUBUNIT PROTEIN BS16M"/>
    <property type="match status" value="1"/>
</dbReference>
<dbReference type="Pfam" id="PF00886">
    <property type="entry name" value="Ribosomal_S16"/>
    <property type="match status" value="1"/>
</dbReference>
<dbReference type="SUPFAM" id="SSF54565">
    <property type="entry name" value="Ribosomal protein S16"/>
    <property type="match status" value="1"/>
</dbReference>
<gene>
    <name evidence="1" type="primary">rpsP</name>
    <name type="ordered locus">BPEN_179</name>
</gene>
<protein>
    <recommendedName>
        <fullName evidence="1">Small ribosomal subunit protein bS16</fullName>
    </recommendedName>
    <alternativeName>
        <fullName evidence="2">30S ribosomal protein S16</fullName>
    </alternativeName>
</protein>
<comment type="similarity">
    <text evidence="1">Belongs to the bacterial ribosomal protein bS16 family.</text>
</comment>
<organism>
    <name type="scientific">Blochmanniella pennsylvanica (strain BPEN)</name>
    <dbReference type="NCBI Taxonomy" id="291272"/>
    <lineage>
        <taxon>Bacteria</taxon>
        <taxon>Pseudomonadati</taxon>
        <taxon>Pseudomonadota</taxon>
        <taxon>Gammaproteobacteria</taxon>
        <taxon>Enterobacterales</taxon>
        <taxon>Enterobacteriaceae</taxon>
        <taxon>ant endosymbionts</taxon>
        <taxon>Candidatus Blochmanniella</taxon>
    </lineage>
</organism>
<sequence length="80" mass="9305">MVRIRLARGGHKKTPFYHIVITDSRSARDGRFIERVGFFSPIKFSNRTGLGLRVNLERVKYWLYKGASPSDRVLKLIKNL</sequence>
<feature type="chain" id="PRO_0000243780" description="Small ribosomal subunit protein bS16">
    <location>
        <begin position="1"/>
        <end position="80"/>
    </location>
</feature>
<proteinExistence type="inferred from homology"/>
<name>RS16_BLOPB</name>
<accession>Q493M3</accession>